<gene>
    <name evidence="1" type="primary">glgA</name>
    <name type="ordered locus">NE2264</name>
</gene>
<feature type="chain" id="PRO_0000188625" description="Glycogen synthase">
    <location>
        <begin position="1"/>
        <end position="495"/>
    </location>
</feature>
<feature type="binding site" evidence="1">
    <location>
        <position position="24"/>
    </location>
    <ligand>
        <name>ADP-alpha-D-glucose</name>
        <dbReference type="ChEBI" id="CHEBI:57498"/>
    </ligand>
</feature>
<proteinExistence type="inferred from homology"/>
<organism>
    <name type="scientific">Nitrosomonas europaea (strain ATCC 19718 / CIP 103999 / KCTC 2705 / NBRC 14298)</name>
    <dbReference type="NCBI Taxonomy" id="228410"/>
    <lineage>
        <taxon>Bacteria</taxon>
        <taxon>Pseudomonadati</taxon>
        <taxon>Pseudomonadota</taxon>
        <taxon>Betaproteobacteria</taxon>
        <taxon>Nitrosomonadales</taxon>
        <taxon>Nitrosomonadaceae</taxon>
        <taxon>Nitrosomonas</taxon>
    </lineage>
</organism>
<keyword id="KW-0320">Glycogen biosynthesis</keyword>
<keyword id="KW-0328">Glycosyltransferase</keyword>
<keyword id="KW-1185">Reference proteome</keyword>
<keyword id="KW-0808">Transferase</keyword>
<dbReference type="EC" id="2.4.1.21" evidence="1"/>
<dbReference type="EMBL" id="AL954747">
    <property type="protein sequence ID" value="CAD86176.1"/>
    <property type="molecule type" value="Genomic_DNA"/>
</dbReference>
<dbReference type="RefSeq" id="WP_011112755.1">
    <property type="nucleotide sequence ID" value="NC_004757.1"/>
</dbReference>
<dbReference type="SMR" id="Q82SP3"/>
<dbReference type="STRING" id="228410.NE2264"/>
<dbReference type="CAZy" id="GT5">
    <property type="family name" value="Glycosyltransferase Family 5"/>
</dbReference>
<dbReference type="GeneID" id="87105400"/>
<dbReference type="KEGG" id="neu:NE2264"/>
<dbReference type="eggNOG" id="COG0297">
    <property type="taxonomic scope" value="Bacteria"/>
</dbReference>
<dbReference type="HOGENOM" id="CLU_009583_18_2_4"/>
<dbReference type="OrthoDB" id="9808590at2"/>
<dbReference type="PhylomeDB" id="Q82SP3"/>
<dbReference type="UniPathway" id="UPA00164"/>
<dbReference type="Proteomes" id="UP000001416">
    <property type="component" value="Chromosome"/>
</dbReference>
<dbReference type="GO" id="GO:0009011">
    <property type="term" value="F:alpha-1,4-glucan glucosyltransferase (ADP-glucose donor) activity"/>
    <property type="evidence" value="ECO:0007669"/>
    <property type="project" value="UniProtKB-UniRule"/>
</dbReference>
<dbReference type="GO" id="GO:0004373">
    <property type="term" value="F:alpha-1,4-glucan glucosyltransferase (UDP-glucose donor) activity"/>
    <property type="evidence" value="ECO:0007669"/>
    <property type="project" value="InterPro"/>
</dbReference>
<dbReference type="GO" id="GO:0005978">
    <property type="term" value="P:glycogen biosynthetic process"/>
    <property type="evidence" value="ECO:0007669"/>
    <property type="project" value="UniProtKB-UniRule"/>
</dbReference>
<dbReference type="CDD" id="cd03791">
    <property type="entry name" value="GT5_Glycogen_synthase_DULL1-like"/>
    <property type="match status" value="1"/>
</dbReference>
<dbReference type="Gene3D" id="3.40.50.2000">
    <property type="entry name" value="Glycogen Phosphorylase B"/>
    <property type="match status" value="2"/>
</dbReference>
<dbReference type="HAMAP" id="MF_00484">
    <property type="entry name" value="Glycogen_synth"/>
    <property type="match status" value="1"/>
</dbReference>
<dbReference type="InterPro" id="IPR001296">
    <property type="entry name" value="Glyco_trans_1"/>
</dbReference>
<dbReference type="InterPro" id="IPR011835">
    <property type="entry name" value="GS/SS"/>
</dbReference>
<dbReference type="InterPro" id="IPR013534">
    <property type="entry name" value="Starch_synth_cat_dom"/>
</dbReference>
<dbReference type="NCBIfam" id="TIGR02095">
    <property type="entry name" value="glgA"/>
    <property type="match status" value="1"/>
</dbReference>
<dbReference type="NCBIfam" id="NF001899">
    <property type="entry name" value="PRK00654.1-2"/>
    <property type="match status" value="1"/>
</dbReference>
<dbReference type="PANTHER" id="PTHR45825:SF11">
    <property type="entry name" value="ALPHA AMYLASE DOMAIN-CONTAINING PROTEIN"/>
    <property type="match status" value="1"/>
</dbReference>
<dbReference type="PANTHER" id="PTHR45825">
    <property type="entry name" value="GRANULE-BOUND STARCH SYNTHASE 1, CHLOROPLASTIC/AMYLOPLASTIC"/>
    <property type="match status" value="1"/>
</dbReference>
<dbReference type="Pfam" id="PF08323">
    <property type="entry name" value="Glyco_transf_5"/>
    <property type="match status" value="1"/>
</dbReference>
<dbReference type="Pfam" id="PF00534">
    <property type="entry name" value="Glycos_transf_1"/>
    <property type="match status" value="1"/>
</dbReference>
<dbReference type="SUPFAM" id="SSF53756">
    <property type="entry name" value="UDP-Glycosyltransferase/glycogen phosphorylase"/>
    <property type="match status" value="1"/>
</dbReference>
<comment type="function">
    <text evidence="1">Synthesizes alpha-1,4-glucan chains using ADP-glucose.</text>
</comment>
<comment type="catalytic activity">
    <reaction evidence="1">
        <text>[(1-&gt;4)-alpha-D-glucosyl](n) + ADP-alpha-D-glucose = [(1-&gt;4)-alpha-D-glucosyl](n+1) + ADP + H(+)</text>
        <dbReference type="Rhea" id="RHEA:18189"/>
        <dbReference type="Rhea" id="RHEA-COMP:9584"/>
        <dbReference type="Rhea" id="RHEA-COMP:9587"/>
        <dbReference type="ChEBI" id="CHEBI:15378"/>
        <dbReference type="ChEBI" id="CHEBI:15444"/>
        <dbReference type="ChEBI" id="CHEBI:57498"/>
        <dbReference type="ChEBI" id="CHEBI:456216"/>
        <dbReference type="EC" id="2.4.1.21"/>
    </reaction>
</comment>
<comment type="pathway">
    <text evidence="1">Glycan biosynthesis; glycogen biosynthesis.</text>
</comment>
<comment type="similarity">
    <text evidence="1">Belongs to the glycosyltransferase 1 family. Bacterial/plant glycogen synthase subfamily.</text>
</comment>
<accession>Q82SP3</accession>
<reference key="1">
    <citation type="journal article" date="2003" name="J. Bacteriol.">
        <title>Complete genome sequence of the ammonia-oxidizing bacterium and obligate chemolithoautotroph Nitrosomonas europaea.</title>
        <authorList>
            <person name="Chain P."/>
            <person name="Lamerdin J.E."/>
            <person name="Larimer F.W."/>
            <person name="Regala W."/>
            <person name="Lao V."/>
            <person name="Land M.L."/>
            <person name="Hauser L."/>
            <person name="Hooper A.B."/>
            <person name="Klotz M.G."/>
            <person name="Norton J."/>
            <person name="Sayavedra-Soto L.A."/>
            <person name="Arciero D.M."/>
            <person name="Hommes N.G."/>
            <person name="Whittaker M.M."/>
            <person name="Arp D.J."/>
        </authorList>
    </citation>
    <scope>NUCLEOTIDE SEQUENCE [LARGE SCALE GENOMIC DNA]</scope>
    <source>
        <strain>ATCC 19718 / CIP 103999 / KCTC 2705 / NBRC 14298</strain>
    </source>
</reference>
<name>GLGA_NITEU</name>
<evidence type="ECO:0000255" key="1">
    <source>
        <dbReference type="HAMAP-Rule" id="MF_00484"/>
    </source>
</evidence>
<protein>
    <recommendedName>
        <fullName evidence="1">Glycogen synthase</fullName>
        <ecNumber evidence="1">2.4.1.21</ecNumber>
    </recommendedName>
    <alternativeName>
        <fullName evidence="1">Starch [bacterial glycogen] synthase</fullName>
    </alternativeName>
</protein>
<sequence length="495" mass="54721">MSSSPSRKNPRVLFVTSEVFPLCKTGGLGDVSAALPAALRELKADVRLLVPGYPSVLSGLKYKRKLAEFDLLPHFPPTTLFSSRLQINESVSLPLYVIHCPELYQRPGGIYLDDDGQDWPDNAQRFGLLSKMGALLASDASPLSWIPDIIHCNDWQSGLTPAYLHYHSGKKAASLMTLHNLAFQGCFPPDEVARLGLPPESFSVHGVEYYGNLSFLKAGIYYATRITTVSPTYAREIQHEPLGFGLQGLLAERSNAITGIINGIDNTVWNPATDPHIVKKYSSRNLAAKKINKLALQREMGLEENETIPLFAGISRLSYQKGYDILLQVAPMLADLPAQLVLLGKGDQSLEKQLVMLAQTNPARIAVRIDYDEALSHRINASADCFLMPSRFEPCGLNQMYSQRYGTPPIVHTTGGLIDTVTDLAPDTPAGESASGFHFHEMTADAFMNGIGRAIDAYYNTRLWKTLQHNGMRKDFSWRSSALAYLSIYSLLMQR</sequence>